<gene>
    <name evidence="7" type="primary">mim2</name>
    <name evidence="6" type="synonym">tam7</name>
    <name evidence="9" type="ORF">SPBC409.23</name>
</gene>
<protein>
    <recommendedName>
        <fullName evidence="1">Mitochondrial import protein 2</fullName>
    </recommendedName>
    <alternativeName>
        <fullName>Transcripts altered in meiosis protein 7</fullName>
    </alternativeName>
</protein>
<feature type="chain" id="PRO_0000416516" description="Mitochondrial import protein 2">
    <location>
        <begin position="1"/>
        <end position="72"/>
    </location>
</feature>
<feature type="topological domain" description="Cytoplasmic" evidence="1">
    <location>
        <begin position="1"/>
        <end position="34"/>
    </location>
</feature>
<feature type="transmembrane region" description="Helical" evidence="2">
    <location>
        <begin position="35"/>
        <end position="52"/>
    </location>
</feature>
<feature type="topological domain" description="Mitochondrial intermembrane" evidence="1">
    <location>
        <begin position="53"/>
        <end position="72"/>
    </location>
</feature>
<feature type="region of interest" description="Disordered" evidence="3">
    <location>
        <begin position="1"/>
        <end position="22"/>
    </location>
</feature>
<dbReference type="EMBL" id="CU329671">
    <property type="protein sequence ID" value="CCD31358.1"/>
    <property type="molecule type" value="Genomic_DNA"/>
</dbReference>
<dbReference type="RefSeq" id="XP_004001705.1">
    <property type="nucleotide sequence ID" value="XM_004001656.1"/>
</dbReference>
<dbReference type="SMR" id="G2TRP0"/>
<dbReference type="BioGRID" id="4254178">
    <property type="interactions" value="2"/>
</dbReference>
<dbReference type="FunCoup" id="G2TRP0">
    <property type="interactions" value="2"/>
</dbReference>
<dbReference type="STRING" id="284812.G2TRP0"/>
<dbReference type="iPTMnet" id="G2TRP0"/>
<dbReference type="PaxDb" id="4896-SPBC409.23.1"/>
<dbReference type="EnsemblFungi" id="SPBC409.23.1">
    <property type="protein sequence ID" value="SPBC409.23.1:pep"/>
    <property type="gene ID" value="SPBC409.23"/>
</dbReference>
<dbReference type="PomBase" id="SPBC409.23">
    <property type="gene designation" value="mim2"/>
</dbReference>
<dbReference type="VEuPathDB" id="FungiDB:SPBC409.23"/>
<dbReference type="HOGENOM" id="CLU_2759254_0_0_1"/>
<dbReference type="InParanoid" id="G2TRP0"/>
<dbReference type="OMA" id="FHVWARW"/>
<dbReference type="PRO" id="PR:G2TRP0"/>
<dbReference type="Proteomes" id="UP000002485">
    <property type="component" value="Chromosome II"/>
</dbReference>
<dbReference type="GO" id="GO:0140595">
    <property type="term" value="C:MIM complex"/>
    <property type="evidence" value="ECO:0000353"/>
    <property type="project" value="PomBase"/>
</dbReference>
<dbReference type="GO" id="GO:0005741">
    <property type="term" value="C:mitochondrial outer membrane"/>
    <property type="evidence" value="ECO:0000318"/>
    <property type="project" value="GO_Central"/>
</dbReference>
<dbReference type="GO" id="GO:0005739">
    <property type="term" value="C:mitochondrion"/>
    <property type="evidence" value="ECO:0000269"/>
    <property type="project" value="PomBase"/>
</dbReference>
<dbReference type="GO" id="GO:0070096">
    <property type="term" value="P:mitochondrial outer membrane translocase complex assembly"/>
    <property type="evidence" value="ECO:0000318"/>
    <property type="project" value="GO_Central"/>
</dbReference>
<dbReference type="GO" id="GO:0045040">
    <property type="term" value="P:protein insertion into mitochondrial outer membrane"/>
    <property type="evidence" value="ECO:0000315"/>
    <property type="project" value="PomBase"/>
</dbReference>
<dbReference type="InterPro" id="IPR037652">
    <property type="entry name" value="Mim2"/>
</dbReference>
<dbReference type="PANTHER" id="PTHR28230">
    <property type="entry name" value="CHROMOSOME 1, WHOLE GENOME SHOTGUN SEQUENCE"/>
    <property type="match status" value="1"/>
</dbReference>
<dbReference type="PANTHER" id="PTHR28230:SF1">
    <property type="entry name" value="MITOCHONDRIAL IMPORT PROTEIN 2"/>
    <property type="match status" value="1"/>
</dbReference>
<dbReference type="Pfam" id="PF19117">
    <property type="entry name" value="Mim2"/>
    <property type="match status" value="1"/>
</dbReference>
<organism>
    <name type="scientific">Schizosaccharomyces pombe (strain 972 / ATCC 24843)</name>
    <name type="common">Fission yeast</name>
    <dbReference type="NCBI Taxonomy" id="284812"/>
    <lineage>
        <taxon>Eukaryota</taxon>
        <taxon>Fungi</taxon>
        <taxon>Dikarya</taxon>
        <taxon>Ascomycota</taxon>
        <taxon>Taphrinomycotina</taxon>
        <taxon>Schizosaccharomycetes</taxon>
        <taxon>Schizosaccharomycetales</taxon>
        <taxon>Schizosaccharomycetaceae</taxon>
        <taxon>Schizosaccharomyces</taxon>
    </lineage>
</organism>
<reference key="1">
    <citation type="journal article" date="2002" name="Nature">
        <title>The genome sequence of Schizosaccharomyces pombe.</title>
        <authorList>
            <person name="Wood V."/>
            <person name="Gwilliam R."/>
            <person name="Rajandream M.A."/>
            <person name="Lyne M.H."/>
            <person name="Lyne R."/>
            <person name="Stewart A."/>
            <person name="Sgouros J.G."/>
            <person name="Peat N."/>
            <person name="Hayles J."/>
            <person name="Baker S.G."/>
            <person name="Basham D."/>
            <person name="Bowman S."/>
            <person name="Brooks K."/>
            <person name="Brown D."/>
            <person name="Brown S."/>
            <person name="Chillingworth T."/>
            <person name="Churcher C.M."/>
            <person name="Collins M."/>
            <person name="Connor R."/>
            <person name="Cronin A."/>
            <person name="Davis P."/>
            <person name="Feltwell T."/>
            <person name="Fraser A."/>
            <person name="Gentles S."/>
            <person name="Goble A."/>
            <person name="Hamlin N."/>
            <person name="Harris D.E."/>
            <person name="Hidalgo J."/>
            <person name="Hodgson G."/>
            <person name="Holroyd S."/>
            <person name="Hornsby T."/>
            <person name="Howarth S."/>
            <person name="Huckle E.J."/>
            <person name="Hunt S."/>
            <person name="Jagels K."/>
            <person name="James K.D."/>
            <person name="Jones L."/>
            <person name="Jones M."/>
            <person name="Leather S."/>
            <person name="McDonald S."/>
            <person name="McLean J."/>
            <person name="Mooney P."/>
            <person name="Moule S."/>
            <person name="Mungall K.L."/>
            <person name="Murphy L.D."/>
            <person name="Niblett D."/>
            <person name="Odell C."/>
            <person name="Oliver K."/>
            <person name="O'Neil S."/>
            <person name="Pearson D."/>
            <person name="Quail M.A."/>
            <person name="Rabbinowitsch E."/>
            <person name="Rutherford K.M."/>
            <person name="Rutter S."/>
            <person name="Saunders D."/>
            <person name="Seeger K."/>
            <person name="Sharp S."/>
            <person name="Skelton J."/>
            <person name="Simmonds M.N."/>
            <person name="Squares R."/>
            <person name="Squares S."/>
            <person name="Stevens K."/>
            <person name="Taylor K."/>
            <person name="Taylor R.G."/>
            <person name="Tivey A."/>
            <person name="Walsh S.V."/>
            <person name="Warren T."/>
            <person name="Whitehead S."/>
            <person name="Woodward J.R."/>
            <person name="Volckaert G."/>
            <person name="Aert R."/>
            <person name="Robben J."/>
            <person name="Grymonprez B."/>
            <person name="Weltjens I."/>
            <person name="Vanstreels E."/>
            <person name="Rieger M."/>
            <person name="Schaefer M."/>
            <person name="Mueller-Auer S."/>
            <person name="Gabel C."/>
            <person name="Fuchs M."/>
            <person name="Duesterhoeft A."/>
            <person name="Fritzc C."/>
            <person name="Holzer E."/>
            <person name="Moestl D."/>
            <person name="Hilbert H."/>
            <person name="Borzym K."/>
            <person name="Langer I."/>
            <person name="Beck A."/>
            <person name="Lehrach H."/>
            <person name="Reinhardt R."/>
            <person name="Pohl T.M."/>
            <person name="Eger P."/>
            <person name="Zimmermann W."/>
            <person name="Wedler H."/>
            <person name="Wambutt R."/>
            <person name="Purnelle B."/>
            <person name="Goffeau A."/>
            <person name="Cadieu E."/>
            <person name="Dreano S."/>
            <person name="Gloux S."/>
            <person name="Lelaure V."/>
            <person name="Mottier S."/>
            <person name="Galibert F."/>
            <person name="Aves S.J."/>
            <person name="Xiang Z."/>
            <person name="Hunt C."/>
            <person name="Moore K."/>
            <person name="Hurst S.M."/>
            <person name="Lucas M."/>
            <person name="Rochet M."/>
            <person name="Gaillardin C."/>
            <person name="Tallada V.A."/>
            <person name="Garzon A."/>
            <person name="Thode G."/>
            <person name="Daga R.R."/>
            <person name="Cruzado L."/>
            <person name="Jimenez J."/>
            <person name="Sanchez M."/>
            <person name="del Rey F."/>
            <person name="Benito J."/>
            <person name="Dominguez A."/>
            <person name="Revuelta J.L."/>
            <person name="Moreno S."/>
            <person name="Armstrong J."/>
            <person name="Forsburg S.L."/>
            <person name="Cerutti L."/>
            <person name="Lowe T."/>
            <person name="McCombie W.R."/>
            <person name="Paulsen I."/>
            <person name="Potashkin J."/>
            <person name="Shpakovski G.V."/>
            <person name="Ussery D."/>
            <person name="Barrell B.G."/>
            <person name="Nurse P."/>
        </authorList>
    </citation>
    <scope>NUCLEOTIDE SEQUENCE [LARGE SCALE GENOMIC DNA]</scope>
    <source>
        <strain>972 / ATCC 24843</strain>
    </source>
</reference>
<reference key="2">
    <citation type="journal article" date="2011" name="Genetics">
        <title>Augmented annotation of the Schizosaccharomyces pombe genome reveals additional genes required for growth and viability.</title>
        <authorList>
            <person name="Bitton D.A."/>
            <person name="Wood V."/>
            <person name="Scutt P.J."/>
            <person name="Grallert A."/>
            <person name="Yates T."/>
            <person name="Smith D.L."/>
            <person name="Hagan I.M."/>
            <person name="Miller C.J."/>
        </authorList>
    </citation>
    <scope>IDENTIFICATION</scope>
    <scope>INDUCTION</scope>
    <scope>DISRUPTION PHENOTYPE</scope>
</reference>
<reference key="3">
    <citation type="journal article" date="2020" name="Elife">
        <title>Atg43 tethers isolation membranes to mitochondria to promote starvation-induced mitophagy in fission yeast.</title>
        <authorList>
            <person name="Fukuda T."/>
            <person name="Ebi Y."/>
            <person name="Saigusa T."/>
            <person name="Furukawa K."/>
            <person name="Yamashita S.I."/>
            <person name="Inoue K."/>
            <person name="Kobayashi D."/>
            <person name="Yoshida Y."/>
            <person name="Kanki T."/>
        </authorList>
    </citation>
    <scope>FUNCTION</scope>
    <scope>IDENTIFICATION IN THE MIM COMPLEX</scope>
    <scope>INTERACTION WITH MIM1 AND ATG43</scope>
    <scope>DISRUPTION PHENOTYPE</scope>
</reference>
<sequence>MAEVLDLEIDPISDGEDDTYSSELDDDLKDSIEQLERVLCLVVFPLLGKFLGRKFAFHAWARWLERRRLVSN</sequence>
<accession>G2TRP0</accession>
<proteinExistence type="evidence at protein level"/>
<name>MIM2_SCHPO</name>
<keyword id="KW-0472">Membrane</keyword>
<keyword id="KW-0496">Mitochondrion</keyword>
<keyword id="KW-1000">Mitochondrion outer membrane</keyword>
<keyword id="KW-0653">Protein transport</keyword>
<keyword id="KW-1185">Reference proteome</keyword>
<keyword id="KW-0812">Transmembrane</keyword>
<keyword id="KW-1133">Transmembrane helix</keyword>
<keyword id="KW-0813">Transport</keyword>
<evidence type="ECO:0000250" key="1">
    <source>
        <dbReference type="UniProtKB" id="Q3E798"/>
    </source>
</evidence>
<evidence type="ECO:0000255" key="2"/>
<evidence type="ECO:0000256" key="3">
    <source>
        <dbReference type="SAM" id="MobiDB-lite"/>
    </source>
</evidence>
<evidence type="ECO:0000269" key="4">
    <source>
    </source>
</evidence>
<evidence type="ECO:0000269" key="5">
    <source>
    </source>
</evidence>
<evidence type="ECO:0000303" key="6">
    <source>
    </source>
</evidence>
<evidence type="ECO:0000303" key="7">
    <source>
    </source>
</evidence>
<evidence type="ECO:0000305" key="8"/>
<evidence type="ECO:0000312" key="9">
    <source>
        <dbReference type="PomBase" id="SPBC409.23"/>
    </source>
</evidence>
<comment type="function">
    <text evidence="1 5">Component of the mitochondrial outer import machinery (MIM) complex that mediates transport of proteins into mitochondrial compartments (PubMed:33138913). Promotes the insertion of tom70 into the outer mitochondrial membrane (PubMed:33138913). Promotes the insertion of atg43 into the outer mitochondrial membrane (PubMed:33138913). Involved in import of the subset of proteins with multiple alpha-helical transmembrane segments (By similarity).</text>
</comment>
<comment type="subunit">
    <text evidence="5">Component of the mitochondrial outer import machinery (MIM) complex containing at least mim1 and mim2 (PubMed:33138913). Interacts with mim1 (PubMed:33138913). Interacts with mitophagy receptor atg43 (PubMed:33138913).</text>
</comment>
<comment type="subcellular location">
    <subcellularLocation>
        <location evidence="1">Mitochondrion outer membrane</location>
        <topology evidence="2">Single-pass membrane protein</topology>
    </subcellularLocation>
</comment>
<comment type="induction">
    <text evidence="4">Differentially expressed during meiosis.</text>
</comment>
<comment type="disruption phenotype">
    <text evidence="4 5">Abnormal localization of atg43 to the outer mitochondrial membrane leading to abnormal mitophagy during nitrogen starvation (PubMed:33138913). Leads to extremely slow growth at various temperatures and delayed commitment to mitosis (PubMed:21270388, PubMed:33138913).</text>
</comment>
<comment type="similarity">
    <text evidence="8">Belongs to the MIM2 family.</text>
</comment>